<comment type="function">
    <text evidence="1">Catalyzes the ferrous insertion into protoporphyrin IX.</text>
</comment>
<comment type="catalytic activity">
    <reaction evidence="1">
        <text>heme b + 2 H(+) = protoporphyrin IX + Fe(2+)</text>
        <dbReference type="Rhea" id="RHEA:22584"/>
        <dbReference type="ChEBI" id="CHEBI:15378"/>
        <dbReference type="ChEBI" id="CHEBI:29033"/>
        <dbReference type="ChEBI" id="CHEBI:57306"/>
        <dbReference type="ChEBI" id="CHEBI:60344"/>
        <dbReference type="EC" id="4.98.1.1"/>
    </reaction>
</comment>
<comment type="pathway">
    <text evidence="1">Porphyrin-containing compound metabolism; protoheme biosynthesis; protoheme from protoporphyrin-IX: step 1/1.</text>
</comment>
<comment type="subcellular location">
    <subcellularLocation>
        <location evidence="1">Cytoplasm</location>
    </subcellularLocation>
</comment>
<comment type="similarity">
    <text evidence="1">Belongs to the ferrochelatase family.</text>
</comment>
<gene>
    <name evidence="1" type="primary">hemH</name>
    <name type="ordered locus">Ent638_0955</name>
</gene>
<organism>
    <name type="scientific">Enterobacter sp. (strain 638)</name>
    <dbReference type="NCBI Taxonomy" id="399742"/>
    <lineage>
        <taxon>Bacteria</taxon>
        <taxon>Pseudomonadati</taxon>
        <taxon>Pseudomonadota</taxon>
        <taxon>Gammaproteobacteria</taxon>
        <taxon>Enterobacterales</taxon>
        <taxon>Enterobacteriaceae</taxon>
        <taxon>Enterobacter</taxon>
    </lineage>
</organism>
<protein>
    <recommendedName>
        <fullName evidence="1">Ferrochelatase</fullName>
        <ecNumber evidence="1">4.98.1.1</ecNumber>
    </recommendedName>
    <alternativeName>
        <fullName evidence="1">Heme synthase</fullName>
    </alternativeName>
    <alternativeName>
        <fullName evidence="1">Protoheme ferro-lyase</fullName>
    </alternativeName>
</protein>
<accession>A4W7F9</accession>
<feature type="chain" id="PRO_1000059480" description="Ferrochelatase">
    <location>
        <begin position="1"/>
        <end position="320"/>
    </location>
</feature>
<feature type="binding site" evidence="1">
    <location>
        <position position="194"/>
    </location>
    <ligand>
        <name>Fe cation</name>
        <dbReference type="ChEBI" id="CHEBI:24875"/>
    </ligand>
</feature>
<feature type="binding site" evidence="1">
    <location>
        <position position="275"/>
    </location>
    <ligand>
        <name>Fe cation</name>
        <dbReference type="ChEBI" id="CHEBI:24875"/>
    </ligand>
</feature>
<proteinExistence type="inferred from homology"/>
<dbReference type="EC" id="4.98.1.1" evidence="1"/>
<dbReference type="EMBL" id="CP000653">
    <property type="protein sequence ID" value="ABP59639.1"/>
    <property type="molecule type" value="Genomic_DNA"/>
</dbReference>
<dbReference type="RefSeq" id="WP_012016359.1">
    <property type="nucleotide sequence ID" value="NC_009436.1"/>
</dbReference>
<dbReference type="SMR" id="A4W7F9"/>
<dbReference type="STRING" id="399742.Ent638_0955"/>
<dbReference type="KEGG" id="ent:Ent638_0955"/>
<dbReference type="eggNOG" id="COG0276">
    <property type="taxonomic scope" value="Bacteria"/>
</dbReference>
<dbReference type="HOGENOM" id="CLU_018884_0_0_6"/>
<dbReference type="OrthoDB" id="9809741at2"/>
<dbReference type="UniPathway" id="UPA00252">
    <property type="reaction ID" value="UER00325"/>
</dbReference>
<dbReference type="Proteomes" id="UP000000230">
    <property type="component" value="Chromosome"/>
</dbReference>
<dbReference type="GO" id="GO:0005737">
    <property type="term" value="C:cytoplasm"/>
    <property type="evidence" value="ECO:0007669"/>
    <property type="project" value="UniProtKB-SubCell"/>
</dbReference>
<dbReference type="GO" id="GO:0004325">
    <property type="term" value="F:ferrochelatase activity"/>
    <property type="evidence" value="ECO:0007669"/>
    <property type="project" value="UniProtKB-UniRule"/>
</dbReference>
<dbReference type="GO" id="GO:0046872">
    <property type="term" value="F:metal ion binding"/>
    <property type="evidence" value="ECO:0007669"/>
    <property type="project" value="UniProtKB-KW"/>
</dbReference>
<dbReference type="GO" id="GO:0006783">
    <property type="term" value="P:heme biosynthetic process"/>
    <property type="evidence" value="ECO:0007669"/>
    <property type="project" value="UniProtKB-UniRule"/>
</dbReference>
<dbReference type="CDD" id="cd00419">
    <property type="entry name" value="Ferrochelatase_C"/>
    <property type="match status" value="1"/>
</dbReference>
<dbReference type="CDD" id="cd03411">
    <property type="entry name" value="Ferrochelatase_N"/>
    <property type="match status" value="1"/>
</dbReference>
<dbReference type="FunFam" id="3.40.50.1400:FF:000004">
    <property type="entry name" value="Ferrochelatase"/>
    <property type="match status" value="1"/>
</dbReference>
<dbReference type="Gene3D" id="3.40.50.1400">
    <property type="match status" value="2"/>
</dbReference>
<dbReference type="HAMAP" id="MF_00323">
    <property type="entry name" value="Ferrochelatase"/>
    <property type="match status" value="1"/>
</dbReference>
<dbReference type="InterPro" id="IPR001015">
    <property type="entry name" value="Ferrochelatase"/>
</dbReference>
<dbReference type="InterPro" id="IPR019772">
    <property type="entry name" value="Ferrochelatase_AS"/>
</dbReference>
<dbReference type="InterPro" id="IPR033644">
    <property type="entry name" value="Ferrochelatase_C"/>
</dbReference>
<dbReference type="InterPro" id="IPR033659">
    <property type="entry name" value="Ferrochelatase_N"/>
</dbReference>
<dbReference type="NCBIfam" id="TIGR00109">
    <property type="entry name" value="hemH"/>
    <property type="match status" value="1"/>
</dbReference>
<dbReference type="PANTHER" id="PTHR11108">
    <property type="entry name" value="FERROCHELATASE"/>
    <property type="match status" value="1"/>
</dbReference>
<dbReference type="PANTHER" id="PTHR11108:SF1">
    <property type="entry name" value="FERROCHELATASE, MITOCHONDRIAL"/>
    <property type="match status" value="1"/>
</dbReference>
<dbReference type="Pfam" id="PF00762">
    <property type="entry name" value="Ferrochelatase"/>
    <property type="match status" value="1"/>
</dbReference>
<dbReference type="SUPFAM" id="SSF53800">
    <property type="entry name" value="Chelatase"/>
    <property type="match status" value="1"/>
</dbReference>
<dbReference type="PROSITE" id="PS00534">
    <property type="entry name" value="FERROCHELATASE"/>
    <property type="match status" value="1"/>
</dbReference>
<reference key="1">
    <citation type="journal article" date="2010" name="PLoS Genet.">
        <title>Genome sequence of the plant growth promoting endophytic bacterium Enterobacter sp. 638.</title>
        <authorList>
            <person name="Taghavi S."/>
            <person name="van der Lelie D."/>
            <person name="Hoffman A."/>
            <person name="Zhang Y.B."/>
            <person name="Walla M.D."/>
            <person name="Vangronsveld J."/>
            <person name="Newman L."/>
            <person name="Monchy S."/>
        </authorList>
    </citation>
    <scope>NUCLEOTIDE SEQUENCE [LARGE SCALE GENOMIC DNA]</scope>
    <source>
        <strain>638</strain>
    </source>
</reference>
<keyword id="KW-0963">Cytoplasm</keyword>
<keyword id="KW-0350">Heme biosynthesis</keyword>
<keyword id="KW-0408">Iron</keyword>
<keyword id="KW-0456">Lyase</keyword>
<keyword id="KW-0479">Metal-binding</keyword>
<keyword id="KW-0627">Porphyrin biosynthesis</keyword>
<evidence type="ECO:0000255" key="1">
    <source>
        <dbReference type="HAMAP-Rule" id="MF_00323"/>
    </source>
</evidence>
<sequence length="320" mass="36076">MSQAKTGILLANLGTPEAPTPAAVKRYLRQFLSDTRVVDTPRVLWWPLLRGVILPIRSPRVAKLYQSVWMEEGSPLMVYSRRQEKALAARLPDMPVALGMSYGKPSLESAVENLLSQDVEHIVVLALYPQYSCSTVAAVWDELARILATRRHIPGITFIRDYADDEMYIAALVNSARASFAKHGEPDLLLLSYHGIPQRYADEGDDYPQRCRDTTRELVSALGLPPEKVMMTFQSRFGREPWLTPYTDETLKMLGEKGVKHVQVMSPGFSADCLETLEEIAVQNREFFLEAGGTKYEYIPALNDSPEHIEMMVSLVTTRR</sequence>
<name>HEMH_ENT38</name>